<comment type="function">
    <text evidence="2 10 12 13">Serine/threonine-protein kinase component of the WNK4-SPAK/OSR1 kinase cascade, which acts as a key regulator of ion transport in the distal nephron and blood pressure (By similarity). The WNK4-SPAK/OSR1 kinase cascade is composed of WNK4, which mediates phosphorylation and activation of downstream kinases OXSR1/OSR1 and STK39/SPAK (PubMed:16832045). Following activation, OXSR1/OSR1 and STK39/SPAK catalyze phosphorylation of ion cotransporters, such as SLC12A1/NKCC2, SLC12A2/NKCC1, SLC12A3/NCC, SLC12A5/KCC2 or SLC12A6/KCC3, regulating their activity (PubMed:16832045, PubMed:22989884). Acts as a molecular switch that regulates the balance between renal salt reabsorption and K(+) secretion by modulating the activities of renal transporters and channels, including the Na-Cl cotransporter SLC12A3/NCC and the K(+) channel, KCNJ1/ROMK (By similarity). Regulates NaCl reabsorption in the distal nephron by activating the thiazide-sensitive Na-Cl cotransporter SLC12A3/NCC in distal convoluted tubule cells of kidney: activates SLC12A3/NCC in a OXSR1/OSR1- and STK39/SPAK-dependent process (By similarity). Also acts as a scaffold protein independently of its protein kinase activity: negatively regulates cell membrane localization of various transporters and channels (CFTR, KCNJ1/ROMK, SLC4A4, SLC26A9 and TRPV4) by clathrin-dependent endocytosis (By similarity). Also inhibits the activity of the epithelial Na(+) channel (ENaC) SCNN1A, SCNN1B, SCNN1D in a inase-independent mechanism (By similarity). May also phosphorylate NEDD4L (PubMed:20525693).</text>
</comment>
<comment type="catalytic activity">
    <reaction evidence="3">
        <text>L-seryl-[protein] + ATP = O-phospho-L-seryl-[protein] + ADP + H(+)</text>
        <dbReference type="Rhea" id="RHEA:17989"/>
        <dbReference type="Rhea" id="RHEA-COMP:9863"/>
        <dbReference type="Rhea" id="RHEA-COMP:11604"/>
        <dbReference type="ChEBI" id="CHEBI:15378"/>
        <dbReference type="ChEBI" id="CHEBI:29999"/>
        <dbReference type="ChEBI" id="CHEBI:30616"/>
        <dbReference type="ChEBI" id="CHEBI:83421"/>
        <dbReference type="ChEBI" id="CHEBI:456216"/>
        <dbReference type="EC" id="2.7.11.1"/>
    </reaction>
</comment>
<comment type="catalytic activity">
    <reaction evidence="10">
        <text>L-threonyl-[protein] + ATP = O-phospho-L-threonyl-[protein] + ADP + H(+)</text>
        <dbReference type="Rhea" id="RHEA:46608"/>
        <dbReference type="Rhea" id="RHEA-COMP:11060"/>
        <dbReference type="Rhea" id="RHEA-COMP:11605"/>
        <dbReference type="ChEBI" id="CHEBI:15378"/>
        <dbReference type="ChEBI" id="CHEBI:30013"/>
        <dbReference type="ChEBI" id="CHEBI:30616"/>
        <dbReference type="ChEBI" id="CHEBI:61977"/>
        <dbReference type="ChEBI" id="CHEBI:456216"/>
        <dbReference type="EC" id="2.7.11.1"/>
    </reaction>
</comment>
<comment type="cofactor">
    <cofactor evidence="3">
        <name>Mg(2+)</name>
        <dbReference type="ChEBI" id="CHEBI:18420"/>
    </cofactor>
</comment>
<comment type="activity regulation">
    <text evidence="2 4">Activation requires autophosphorylation of Ser-331 and Ser-335 (By similarity). Autophosphorylation and subsequent activation is inhibited by increases in intracellular ionic strength: Cl(-) potently inhibits WNK4 kinase activity via direct binding (By similarity). Also inhibited by K(+) ions (By similarity).</text>
</comment>
<comment type="subunit">
    <text evidence="2">Interacts with the C-terminal region of KCNJ1.</text>
</comment>
<comment type="interaction">
    <interactant intactId="EBI-766352">
        <id>Q96J92</id>
    </interactant>
    <interactant intactId="EBI-620853">
        <id>O95747</id>
        <label>OXSR1</label>
    </interactant>
    <organismsDiffer>false</organismsDiffer>
    <experiments>12</experiments>
</comment>
<comment type="interaction">
    <interactant intactId="EBI-766352">
        <id>Q96J92</id>
    </interactant>
    <interactant intactId="EBI-356498">
        <id>P62258</id>
        <label>YWHAE</label>
    </interactant>
    <organismsDiffer>false</organismsDiffer>
    <experiments>2</experiments>
</comment>
<comment type="subcellular location">
    <subcellularLocation>
        <location evidence="2">Cell junction</location>
        <location evidence="2">Tight junction</location>
    </subcellularLocation>
    <text evidence="2">Present exclusively in intercellular junctions in the distal convoluted tubule and in both the cytoplasm and intercellular junctions in the cortical collecting duct (By similarity). WNK4 is part of the tight junction complex (By similarity).</text>
</comment>
<comment type="alternative products">
    <event type="alternative splicing"/>
    <isoform>
        <id>Q96J92-1</id>
        <name evidence="7 25">1</name>
        <sequence type="displayed"/>
    </isoform>
    <isoform>
        <id>Q96J92-2</id>
        <name evidence="25">2</name>
        <sequence type="described" ref="VSP_050648 VSP_050649 VSP_050650 VSP_050651"/>
    </isoform>
    <isoform>
        <id>Q96J92-3</id>
        <name evidence="25">3</name>
        <sequence type="described" ref="VSP_050652 VSP_050653"/>
    </isoform>
</comment>
<comment type="tissue specificity">
    <text evidence="8">Expressed in kidney, colon and skin.</text>
</comment>
<comment type="domain">
    <text evidence="9 19">The RFXV motif mediates recognition with downstream kinases OXSR1/OSR1 and STK39/SPAK.</text>
</comment>
<comment type="PTM">
    <text evidence="2 4 21">Autophosphorylated at Ser-331 and Ser-335, promoting its activation (By similarity). Phosphorylated by WNK1 and WNK3 (By similarity). Phosphorylated at Ser-575 in a MAP3K15/ASK3-dependent process in response to osmotic stress or hypotonic low-chloride stimulation (PubMed:26732173).</text>
</comment>
<comment type="PTM">
    <text evidence="14 15 16 17 18 19 20 22">Ubiquitinated by the BCR(KLHL3) complex, leading to its degradation (PubMed:23387299, PubMed:23453970, PubMed:23576762, PubMed:23665031, PubMed:24641320, PubMed:26435498, PubMed:27727489). Also ubiquitinated by the BCR(KLHL2) complex (PubMed:23838290, PubMed:24641320).</text>
</comment>
<comment type="disease" evidence="7 14 15 16 19">
    <disease id="DI-03368">
        <name>Pseudohypoaldosteronism 2B</name>
        <acronym>PHA2B</acronym>
        <description>An autosomal dominant disorder characterized by hypertension, hyperkalemia, hyperchloremia, mild hyperchloremic metabolic acidosis, and correction of physiologic abnormalities by thiazide diuretics.</description>
        <dbReference type="MIM" id="614491"/>
    </disease>
    <text>The disease is caused by variants affecting the gene represented in this entry.</text>
</comment>
<comment type="miscellaneous">
    <molecule>Isoform 3</molecule>
    <text evidence="25">Incomplete sequence.</text>
</comment>
<comment type="similarity">
    <text evidence="5">Belongs to the protein kinase superfamily. Ser/Thr protein kinase family. WNK subfamily.</text>
</comment>
<comment type="caution">
    <text evidence="3">Was named WNK/'with no lysine(K)' because key residues for catalysis, including the lysine involved in ATP binding, are either not conserved or differ compared to the residues described in other kinase family proteins.</text>
</comment>
<comment type="sequence caution" evidence="25">
    <conflict type="erroneous initiation">
        <sequence resource="EMBL-CDS" id="BAC04669"/>
    </conflict>
    <text>Truncated N-terminus.</text>
</comment>
<comment type="sequence caution" evidence="25">
    <conflict type="frameshift">
        <sequence resource="EMBL-CDS" id="CAC48387"/>
    </conflict>
</comment>
<protein>
    <recommendedName>
        <fullName evidence="25">Serine/threonine-protein kinase WNK4</fullName>
        <ecNumber evidence="10">2.7.11.1</ecNumber>
    </recommendedName>
    <alternativeName>
        <fullName evidence="29">Protein kinase lysine-deficient 4</fullName>
    </alternativeName>
    <alternativeName>
        <fullName evidence="23">Protein kinase with no lysine 4</fullName>
    </alternativeName>
</protein>
<proteinExistence type="evidence at protein level"/>
<dbReference type="EC" id="2.7.11.1" evidence="10"/>
<dbReference type="EMBL" id="AF390018">
    <property type="protein sequence ID" value="AAK91995.1"/>
    <property type="molecule type" value="mRNA"/>
</dbReference>
<dbReference type="EMBL" id="AJ316534">
    <property type="protein sequence ID" value="CAC48387.1"/>
    <property type="status" value="ALT_FRAME"/>
    <property type="molecule type" value="mRNA"/>
</dbReference>
<dbReference type="EMBL" id="AK096003">
    <property type="protein sequence ID" value="BAC04669.1"/>
    <property type="status" value="ALT_INIT"/>
    <property type="molecule type" value="mRNA"/>
</dbReference>
<dbReference type="EMBL" id="AK096052">
    <property type="protein sequence ID" value="BAC04688.1"/>
    <property type="molecule type" value="mRNA"/>
</dbReference>
<dbReference type="EMBL" id="EU332870">
    <property type="protein sequence ID" value="ABY87559.1"/>
    <property type="molecule type" value="Genomic_DNA"/>
</dbReference>
<dbReference type="EMBL" id="CH471152">
    <property type="protein sequence ID" value="EAW60881.1"/>
    <property type="molecule type" value="Genomic_DNA"/>
</dbReference>
<dbReference type="EMBL" id="CH471152">
    <property type="protein sequence ID" value="EAW60882.1"/>
    <property type="molecule type" value="Genomic_DNA"/>
</dbReference>
<dbReference type="EMBL" id="BC136664">
    <property type="protein sequence ID" value="AAI36665.1"/>
    <property type="molecule type" value="mRNA"/>
</dbReference>
<dbReference type="EMBL" id="AJ309861">
    <property type="protein sequence ID" value="CAC32991.1"/>
    <property type="molecule type" value="mRNA"/>
</dbReference>
<dbReference type="CCDS" id="CCDS11439.1">
    <molecule id="Q96J92-1"/>
</dbReference>
<dbReference type="RefSeq" id="NP_115763.2">
    <molecule id="Q96J92-1"/>
    <property type="nucleotide sequence ID" value="NM_032387.4"/>
</dbReference>
<dbReference type="PDB" id="2V3S">
    <property type="method" value="X-ray"/>
    <property type="resolution" value="1.70 A"/>
    <property type="chains" value="C/D=1015-1020"/>
</dbReference>
<dbReference type="PDB" id="4CH9">
    <property type="method" value="X-ray"/>
    <property type="resolution" value="1.84 A"/>
    <property type="chains" value="C/D=557-567"/>
</dbReference>
<dbReference type="PDB" id="4CHB">
    <property type="method" value="X-ray"/>
    <property type="resolution" value="1.56 A"/>
    <property type="chains" value="C/D=557-567"/>
</dbReference>
<dbReference type="PDBsum" id="2V3S"/>
<dbReference type="PDBsum" id="4CH9"/>
<dbReference type="PDBsum" id="4CHB"/>
<dbReference type="SMR" id="Q96J92"/>
<dbReference type="BioGRID" id="122421">
    <property type="interactions" value="18"/>
</dbReference>
<dbReference type="CORUM" id="Q96J92"/>
<dbReference type="ELM" id="Q96J92"/>
<dbReference type="FunCoup" id="Q96J92">
    <property type="interactions" value="265"/>
</dbReference>
<dbReference type="IntAct" id="Q96J92">
    <property type="interactions" value="9"/>
</dbReference>
<dbReference type="MINT" id="Q96J92"/>
<dbReference type="STRING" id="9606.ENSP00000246914"/>
<dbReference type="BindingDB" id="Q96J92"/>
<dbReference type="ChEMBL" id="CHEMBL1795196"/>
<dbReference type="TCDB" id="8.A.23.1.50">
    <property type="family name" value="the basigin (basigin) family"/>
</dbReference>
<dbReference type="GlyGen" id="Q96J92">
    <property type="glycosylation" value="1 site, 1 O-linked glycan (1 site)"/>
</dbReference>
<dbReference type="iPTMnet" id="Q96J92"/>
<dbReference type="PhosphoSitePlus" id="Q96J92"/>
<dbReference type="BioMuta" id="WNK4"/>
<dbReference type="DMDM" id="41688789"/>
<dbReference type="jPOST" id="Q96J92"/>
<dbReference type="MassIVE" id="Q96J92"/>
<dbReference type="PaxDb" id="9606-ENSP00000246914"/>
<dbReference type="PeptideAtlas" id="Q96J92"/>
<dbReference type="ProteomicsDB" id="76909">
    <molecule id="Q96J92-1"/>
</dbReference>
<dbReference type="ProteomicsDB" id="76910">
    <molecule id="Q96J92-2"/>
</dbReference>
<dbReference type="ProteomicsDB" id="76911">
    <molecule id="Q96J92-3"/>
</dbReference>
<dbReference type="Pumba" id="Q96J92"/>
<dbReference type="Antibodypedia" id="29411">
    <property type="antibodies" value="235 antibodies from 25 providers"/>
</dbReference>
<dbReference type="DNASU" id="65266"/>
<dbReference type="Ensembl" id="ENST00000246914.10">
    <molecule id="Q96J92-1"/>
    <property type="protein sequence ID" value="ENSP00000246914.4"/>
    <property type="gene ID" value="ENSG00000126562.17"/>
</dbReference>
<dbReference type="GeneID" id="65266"/>
<dbReference type="KEGG" id="hsa:65266"/>
<dbReference type="MANE-Select" id="ENST00000246914.10">
    <property type="protein sequence ID" value="ENSP00000246914.4"/>
    <property type="RefSeq nucleotide sequence ID" value="NM_032387.5"/>
    <property type="RefSeq protein sequence ID" value="NP_115763.2"/>
</dbReference>
<dbReference type="UCSC" id="uc002ibj.4">
    <molecule id="Q96J92-1"/>
    <property type="organism name" value="human"/>
</dbReference>
<dbReference type="AGR" id="HGNC:14544"/>
<dbReference type="CTD" id="65266"/>
<dbReference type="DisGeNET" id="65266"/>
<dbReference type="GeneCards" id="WNK4"/>
<dbReference type="GeneReviews" id="WNK4"/>
<dbReference type="HGNC" id="HGNC:14544">
    <property type="gene designation" value="WNK4"/>
</dbReference>
<dbReference type="HPA" id="ENSG00000126562">
    <property type="expression patterns" value="Tissue enhanced (intestine, kidney, prostate)"/>
</dbReference>
<dbReference type="MalaCards" id="WNK4"/>
<dbReference type="MIM" id="601844">
    <property type="type" value="gene"/>
</dbReference>
<dbReference type="MIM" id="614491">
    <property type="type" value="phenotype"/>
</dbReference>
<dbReference type="neXtProt" id="NX_Q96J92"/>
<dbReference type="OpenTargets" id="ENSG00000126562"/>
<dbReference type="Orphanet" id="88939">
    <property type="disease" value="Pseudohypoaldosteronism type 2B"/>
</dbReference>
<dbReference type="PharmGKB" id="PA134875400"/>
<dbReference type="VEuPathDB" id="HostDB:ENSG00000126562"/>
<dbReference type="eggNOG" id="KOG0584">
    <property type="taxonomic scope" value="Eukaryota"/>
</dbReference>
<dbReference type="GeneTree" id="ENSGT00940000159871"/>
<dbReference type="HOGENOM" id="CLU_000550_2_1_1"/>
<dbReference type="InParanoid" id="Q96J92"/>
<dbReference type="OMA" id="QHHPFNF"/>
<dbReference type="OrthoDB" id="4062651at2759"/>
<dbReference type="PAN-GO" id="Q96J92">
    <property type="GO annotations" value="12 GO annotations based on evolutionary models"/>
</dbReference>
<dbReference type="PhylomeDB" id="Q96J92"/>
<dbReference type="TreeFam" id="TF315363"/>
<dbReference type="PathwayCommons" id="Q96J92"/>
<dbReference type="Reactome" id="R-HSA-2672351">
    <property type="pathway name" value="Stimuli-sensing channels"/>
</dbReference>
<dbReference type="SignaLink" id="Q96J92"/>
<dbReference type="SIGNOR" id="Q96J92"/>
<dbReference type="BioGRID-ORCS" id="65266">
    <property type="hits" value="25 hits in 1194 CRISPR screens"/>
</dbReference>
<dbReference type="ChiTaRS" id="WNK4">
    <property type="organism name" value="human"/>
</dbReference>
<dbReference type="EvolutionaryTrace" id="Q96J92"/>
<dbReference type="GeneWiki" id="WNK4"/>
<dbReference type="GenomeRNAi" id="65266"/>
<dbReference type="Pharos" id="Q96J92">
    <property type="development level" value="Tbio"/>
</dbReference>
<dbReference type="PRO" id="PR:Q96J92"/>
<dbReference type="Proteomes" id="UP000005640">
    <property type="component" value="Chromosome 17"/>
</dbReference>
<dbReference type="RNAct" id="Q96J92">
    <property type="molecule type" value="protein"/>
</dbReference>
<dbReference type="Bgee" id="ENSG00000126562">
    <property type="expression patterns" value="Expressed in kidney epithelium and 118 other cell types or tissues"/>
</dbReference>
<dbReference type="ExpressionAtlas" id="Q96J92">
    <property type="expression patterns" value="baseline and differential"/>
</dbReference>
<dbReference type="GO" id="GO:0005923">
    <property type="term" value="C:bicellular tight junction"/>
    <property type="evidence" value="ECO:0000250"/>
    <property type="project" value="UniProtKB"/>
</dbReference>
<dbReference type="GO" id="GO:0044297">
    <property type="term" value="C:cell body"/>
    <property type="evidence" value="ECO:0007669"/>
    <property type="project" value="Ensembl"/>
</dbReference>
<dbReference type="GO" id="GO:0005737">
    <property type="term" value="C:cytoplasm"/>
    <property type="evidence" value="ECO:0000318"/>
    <property type="project" value="GO_Central"/>
</dbReference>
<dbReference type="GO" id="GO:0005829">
    <property type="term" value="C:cytosol"/>
    <property type="evidence" value="ECO:0000250"/>
    <property type="project" value="ParkinsonsUK-UCL"/>
</dbReference>
<dbReference type="GO" id="GO:0016020">
    <property type="term" value="C:membrane"/>
    <property type="evidence" value="ECO:0000250"/>
    <property type="project" value="ParkinsonsUK-UCL"/>
</dbReference>
<dbReference type="GO" id="GO:0032991">
    <property type="term" value="C:protein-containing complex"/>
    <property type="evidence" value="ECO:0007669"/>
    <property type="project" value="Ensembl"/>
</dbReference>
<dbReference type="GO" id="GO:0005524">
    <property type="term" value="F:ATP binding"/>
    <property type="evidence" value="ECO:0000250"/>
    <property type="project" value="UniProtKB"/>
</dbReference>
<dbReference type="GO" id="GO:0031404">
    <property type="term" value="F:chloride ion binding"/>
    <property type="evidence" value="ECO:0007669"/>
    <property type="project" value="Ensembl"/>
</dbReference>
<dbReference type="GO" id="GO:0008200">
    <property type="term" value="F:ion channel inhibitor activity"/>
    <property type="evidence" value="ECO:0000250"/>
    <property type="project" value="UniProtKB"/>
</dbReference>
<dbReference type="GO" id="GO:0004672">
    <property type="term" value="F:protein kinase activity"/>
    <property type="evidence" value="ECO:0000318"/>
    <property type="project" value="GO_Central"/>
</dbReference>
<dbReference type="GO" id="GO:0106310">
    <property type="term" value="F:protein serine kinase activity"/>
    <property type="evidence" value="ECO:0007669"/>
    <property type="project" value="RHEA"/>
</dbReference>
<dbReference type="GO" id="GO:0004674">
    <property type="term" value="F:protein serine/threonine kinase activity"/>
    <property type="evidence" value="ECO:0000314"/>
    <property type="project" value="UniProt"/>
</dbReference>
<dbReference type="GO" id="GO:0035932">
    <property type="term" value="P:aldosterone secretion"/>
    <property type="evidence" value="ECO:0007669"/>
    <property type="project" value="Ensembl"/>
</dbReference>
<dbReference type="GO" id="GO:0055074">
    <property type="term" value="P:calcium ion homeostasis"/>
    <property type="evidence" value="ECO:0007669"/>
    <property type="project" value="Ensembl"/>
</dbReference>
<dbReference type="GO" id="GO:0071466">
    <property type="term" value="P:cellular response to xenobiotic stimulus"/>
    <property type="evidence" value="ECO:0007669"/>
    <property type="project" value="Ensembl"/>
</dbReference>
<dbReference type="GO" id="GO:0006821">
    <property type="term" value="P:chloride transport"/>
    <property type="evidence" value="ECO:0007669"/>
    <property type="project" value="Ensembl"/>
</dbReference>
<dbReference type="GO" id="GO:0072156">
    <property type="term" value="P:distal tubule morphogenesis"/>
    <property type="evidence" value="ECO:0000315"/>
    <property type="project" value="UniProtKB"/>
</dbReference>
<dbReference type="GO" id="GO:0070371">
    <property type="term" value="P:ERK1 and ERK2 cascade"/>
    <property type="evidence" value="ECO:0007669"/>
    <property type="project" value="Ensembl"/>
</dbReference>
<dbReference type="GO" id="GO:0010467">
    <property type="term" value="P:gene expression"/>
    <property type="evidence" value="ECO:0007669"/>
    <property type="project" value="Ensembl"/>
</dbReference>
<dbReference type="GO" id="GO:0006954">
    <property type="term" value="P:inflammatory response"/>
    <property type="evidence" value="ECO:0007669"/>
    <property type="project" value="Ensembl"/>
</dbReference>
<dbReference type="GO" id="GO:0030644">
    <property type="term" value="P:intracellular chloride ion homeostasis"/>
    <property type="evidence" value="ECO:0007669"/>
    <property type="project" value="Ensembl"/>
</dbReference>
<dbReference type="GO" id="GO:0035556">
    <property type="term" value="P:intracellular signal transduction"/>
    <property type="evidence" value="ECO:0000250"/>
    <property type="project" value="UniProtKB"/>
</dbReference>
<dbReference type="GO" id="GO:0042116">
    <property type="term" value="P:macrophage activation"/>
    <property type="evidence" value="ECO:0007669"/>
    <property type="project" value="Ensembl"/>
</dbReference>
<dbReference type="GO" id="GO:0050801">
    <property type="term" value="P:monoatomic ion homeostasis"/>
    <property type="evidence" value="ECO:0000315"/>
    <property type="project" value="UniProtKB"/>
</dbReference>
<dbReference type="GO" id="GO:0090188">
    <property type="term" value="P:negative regulation of pancreatic juice secretion"/>
    <property type="evidence" value="ECO:0007669"/>
    <property type="project" value="Ensembl"/>
</dbReference>
<dbReference type="GO" id="GO:1903077">
    <property type="term" value="P:negative regulation of protein localization to plasma membrane"/>
    <property type="evidence" value="ECO:0000250"/>
    <property type="project" value="UniProtKB"/>
</dbReference>
<dbReference type="GO" id="GO:0010766">
    <property type="term" value="P:negative regulation of sodium ion transport"/>
    <property type="evidence" value="ECO:0000250"/>
    <property type="project" value="UniProtKB"/>
</dbReference>
<dbReference type="GO" id="GO:0071805">
    <property type="term" value="P:potassium ion transmembrane transport"/>
    <property type="evidence" value="ECO:0007669"/>
    <property type="project" value="Ensembl"/>
</dbReference>
<dbReference type="GO" id="GO:0008104">
    <property type="term" value="P:protein localization"/>
    <property type="evidence" value="ECO:0007669"/>
    <property type="project" value="Ensembl"/>
</dbReference>
<dbReference type="GO" id="GO:0006468">
    <property type="term" value="P:protein phosphorylation"/>
    <property type="evidence" value="ECO:0000250"/>
    <property type="project" value="UniProtKB"/>
</dbReference>
<dbReference type="GO" id="GO:0008217">
    <property type="term" value="P:regulation of blood pressure"/>
    <property type="evidence" value="ECO:0007669"/>
    <property type="project" value="Ensembl"/>
</dbReference>
<dbReference type="GO" id="GO:1903764">
    <property type="term" value="P:regulation of potassium ion export across plasma membrane"/>
    <property type="evidence" value="ECO:0007669"/>
    <property type="project" value="Ensembl"/>
</dbReference>
<dbReference type="GO" id="GO:0070294">
    <property type="term" value="P:renal sodium ion absorption"/>
    <property type="evidence" value="ECO:0000315"/>
    <property type="project" value="UniProtKB"/>
</dbReference>
<dbReference type="GO" id="GO:0003096">
    <property type="term" value="P:renal sodium ion transport"/>
    <property type="evidence" value="ECO:0000250"/>
    <property type="project" value="UniProtKB"/>
</dbReference>
<dbReference type="GO" id="GO:0002021">
    <property type="term" value="P:response to dietary excess"/>
    <property type="evidence" value="ECO:0007669"/>
    <property type="project" value="Ensembl"/>
</dbReference>
<dbReference type="GO" id="GO:0007165">
    <property type="term" value="P:signal transduction"/>
    <property type="evidence" value="ECO:0000318"/>
    <property type="project" value="GO_Central"/>
</dbReference>
<dbReference type="GO" id="GO:0035725">
    <property type="term" value="P:sodium ion transmembrane transport"/>
    <property type="evidence" value="ECO:0007669"/>
    <property type="project" value="Ensembl"/>
</dbReference>
<dbReference type="CDD" id="cd14033">
    <property type="entry name" value="STKc_WNK4"/>
    <property type="match status" value="1"/>
</dbReference>
<dbReference type="FunFam" id="3.10.20.90:FF:000007">
    <property type="entry name" value="Serine/threonine-protein kinase WNK1 isoform 1"/>
    <property type="match status" value="1"/>
</dbReference>
<dbReference type="FunFam" id="1.10.510.10:FF:000006">
    <property type="entry name" value="Serine/threonine-protein kinase WNK1 isoform 2"/>
    <property type="match status" value="1"/>
</dbReference>
<dbReference type="FunFam" id="3.30.200.20:FF:000010">
    <property type="entry name" value="Serine/threonine-protein kinase WNK1 isoform 2"/>
    <property type="match status" value="1"/>
</dbReference>
<dbReference type="FunFam" id="3.10.20.90:FF:000127">
    <property type="entry name" value="serine/threonine-protein kinase WNK4 isoform X1"/>
    <property type="match status" value="1"/>
</dbReference>
<dbReference type="Gene3D" id="3.10.20.90">
    <property type="entry name" value="Phosphatidylinositol 3-kinase Catalytic Subunit, Chain A, domain 1"/>
    <property type="match status" value="2"/>
</dbReference>
<dbReference type="Gene3D" id="3.30.200.20">
    <property type="entry name" value="Phosphorylase Kinase, domain 1"/>
    <property type="match status" value="1"/>
</dbReference>
<dbReference type="Gene3D" id="1.10.510.10">
    <property type="entry name" value="Transferase(Phosphotransferase) domain 1"/>
    <property type="match status" value="1"/>
</dbReference>
<dbReference type="InterPro" id="IPR056865">
    <property type="entry name" value="CCTL2_WNK"/>
</dbReference>
<dbReference type="InterPro" id="IPR011009">
    <property type="entry name" value="Kinase-like_dom_sf"/>
</dbReference>
<dbReference type="InterPro" id="IPR024678">
    <property type="entry name" value="Kinase_OSR1/WNK_CCT"/>
</dbReference>
<dbReference type="InterPro" id="IPR000719">
    <property type="entry name" value="Prot_kinase_dom"/>
</dbReference>
<dbReference type="InterPro" id="IPR008271">
    <property type="entry name" value="Ser/Thr_kinase_AS"/>
</dbReference>
<dbReference type="InterPro" id="IPR050588">
    <property type="entry name" value="WNK_Ser-Thr_kinase"/>
</dbReference>
<dbReference type="PANTHER" id="PTHR13902">
    <property type="entry name" value="SERINE/THREONINE-PROTEIN KINASE WNK WITH NO LYSINE -RELATED"/>
    <property type="match status" value="1"/>
</dbReference>
<dbReference type="Pfam" id="PF24889">
    <property type="entry name" value="CCTL2_WNK"/>
    <property type="match status" value="1"/>
</dbReference>
<dbReference type="Pfam" id="PF12202">
    <property type="entry name" value="OSR1_C"/>
    <property type="match status" value="1"/>
</dbReference>
<dbReference type="Pfam" id="PF00069">
    <property type="entry name" value="Pkinase"/>
    <property type="match status" value="1"/>
</dbReference>
<dbReference type="SMART" id="SM00220">
    <property type="entry name" value="S_TKc"/>
    <property type="match status" value="1"/>
</dbReference>
<dbReference type="SUPFAM" id="SSF56112">
    <property type="entry name" value="Protein kinase-like (PK-like)"/>
    <property type="match status" value="1"/>
</dbReference>
<dbReference type="PROSITE" id="PS50011">
    <property type="entry name" value="PROTEIN_KINASE_DOM"/>
    <property type="match status" value="1"/>
</dbReference>
<dbReference type="PROSITE" id="PS00108">
    <property type="entry name" value="PROTEIN_KINASE_ST"/>
    <property type="match status" value="1"/>
</dbReference>
<name>WNK4_HUMAN</name>
<evidence type="ECO:0000250" key="1">
    <source>
        <dbReference type="UniProtKB" id="Q7TPK6"/>
    </source>
</evidence>
<evidence type="ECO:0000250" key="2">
    <source>
        <dbReference type="UniProtKB" id="Q80UE6"/>
    </source>
</evidence>
<evidence type="ECO:0000250" key="3">
    <source>
        <dbReference type="UniProtKB" id="Q9H4A3"/>
    </source>
</evidence>
<evidence type="ECO:0000250" key="4">
    <source>
        <dbReference type="UniProtKB" id="Q9JIH7"/>
    </source>
</evidence>
<evidence type="ECO:0000255" key="5">
    <source>
        <dbReference type="PROSITE-ProRule" id="PRU00159"/>
    </source>
</evidence>
<evidence type="ECO:0000256" key="6">
    <source>
        <dbReference type="SAM" id="MobiDB-lite"/>
    </source>
</evidence>
<evidence type="ECO:0000269" key="7">
    <source>
    </source>
</evidence>
<evidence type="ECO:0000269" key="8">
    <source>
    </source>
</evidence>
<evidence type="ECO:0000269" key="9">
    <source>
    </source>
</evidence>
<evidence type="ECO:0000269" key="10">
    <source>
    </source>
</evidence>
<evidence type="ECO:0000269" key="11">
    <source>
    </source>
</evidence>
<evidence type="ECO:0000269" key="12">
    <source>
    </source>
</evidence>
<evidence type="ECO:0000269" key="13">
    <source>
    </source>
</evidence>
<evidence type="ECO:0000269" key="14">
    <source>
    </source>
</evidence>
<evidence type="ECO:0000269" key="15">
    <source>
    </source>
</evidence>
<evidence type="ECO:0000269" key="16">
    <source>
    </source>
</evidence>
<evidence type="ECO:0000269" key="17">
    <source>
    </source>
</evidence>
<evidence type="ECO:0000269" key="18">
    <source>
    </source>
</evidence>
<evidence type="ECO:0000269" key="19">
    <source>
    </source>
</evidence>
<evidence type="ECO:0000269" key="20">
    <source>
    </source>
</evidence>
<evidence type="ECO:0000269" key="21">
    <source>
    </source>
</evidence>
<evidence type="ECO:0000269" key="22">
    <source>
    </source>
</evidence>
<evidence type="ECO:0000303" key="23">
    <source>
    </source>
</evidence>
<evidence type="ECO:0000303" key="24">
    <source>
    </source>
</evidence>
<evidence type="ECO:0000305" key="25"/>
<evidence type="ECO:0000312" key="26">
    <source>
        <dbReference type="EMBL" id="AAK91995.1"/>
    </source>
</evidence>
<evidence type="ECO:0000312" key="27">
    <source>
        <dbReference type="EMBL" id="CAC32991.1"/>
    </source>
</evidence>
<evidence type="ECO:0000312" key="28">
    <source>
        <dbReference type="EMBL" id="CAC48387.1"/>
    </source>
</evidence>
<evidence type="ECO:0000312" key="29">
    <source>
        <dbReference type="HGNC" id="HGNC:14544"/>
    </source>
</evidence>
<evidence type="ECO:0007744" key="30">
    <source>
        <dbReference type="PDB" id="2V3S"/>
    </source>
</evidence>
<evidence type="ECO:0007744" key="31">
    <source>
        <dbReference type="PDB" id="4CH9"/>
    </source>
</evidence>
<evidence type="ECO:0007744" key="32">
    <source>
        <dbReference type="PDB" id="4CHB"/>
    </source>
</evidence>
<evidence type="ECO:0007744" key="33">
    <source>
    </source>
</evidence>
<evidence type="ECO:0007829" key="34">
    <source>
        <dbReference type="PDB" id="4CHB"/>
    </source>
</evidence>
<keyword id="KW-0002">3D-structure</keyword>
<keyword id="KW-0025">Alternative splicing</keyword>
<keyword id="KW-0067">ATP-binding</keyword>
<keyword id="KW-0965">Cell junction</keyword>
<keyword id="KW-0225">Disease variant</keyword>
<keyword id="KW-1017">Isopeptide bond</keyword>
<keyword id="KW-0418">Kinase</keyword>
<keyword id="KW-0547">Nucleotide-binding</keyword>
<keyword id="KW-0597">Phosphoprotein</keyword>
<keyword id="KW-1267">Proteomics identification</keyword>
<keyword id="KW-1185">Reference proteome</keyword>
<keyword id="KW-0723">Serine/threonine-protein kinase</keyword>
<keyword id="KW-0796">Tight junction</keyword>
<keyword id="KW-0808">Transferase</keyword>
<keyword id="KW-0832">Ubl conjugation</keyword>
<gene>
    <name evidence="23 29" type="primary">WNK4</name>
    <name evidence="29" type="synonym">PRKWNK4</name>
</gene>
<sequence length="1243" mass="134739">MLASPATETTVLMSQTEADLALRPPPPLGTAGQPRLGPPPRRARRFSGKAEPRPRSSRLSRRSSVDLGLLSSWSLPASPAPDPPDPPDSAGPGPARSPPPSSKEPPEGTWTEGAPVKAAEDSARPELPDSAVGPGSREPLRVPEAVALERRREQEEKEDMETQAVATSPDGRYLKFDIEIGRGSFKTVYRGLDTDTTVEVAWCELQTRKLSRAERQRFSEEVEMLKGLQHPNIVRFYDSWKSVLRGQVCIVLVTELMTSGTLKTYLRRFREMKPRVLQRWSRQILRGLHFLHSRVPPILHRDLKCDNVFITGPTGSVKIGDLGLATLKRASFAKSVIGTPEFMAPEMYEEKYDEAVDVYAFGMCMLEMATSEYPYSECQNAAQIYRKVTSGRKPNSFHKVKIPEVKEIIEGCIRTDKNERFTIQDLLAHAFFREERGVHVELAEEDDGEKPGLKLWLRMEDARRGGRPRDNQAIEFLFQLGRDAAEEVAQEMVALGLVCEADYQPVARAVRERVAAIQRKREKLRKARELEALPPEPGPPPATVPMAPGPPSVFPPEPEEPEADQHQPFLFRHASYSSTTSDCETDGYLSSSGFLDASDPALQPPGGVPSSLAESHLCLPSAFALSIPRSGPGSDFSPGDSYASDAASGLSDVGEGMGQMRRPPGRNLRRRPRSRLRVTSVSDQNDRVVECQLQTHNSKMVTFRFDLDGDSPEEIAAAMVYNEFILPSERDGFLRRIREIIQRVETLLKRDTGPMEAAEDTLSPQEEPAPLPALPVPLPDPSNEELQSSTSLEHRSWTAFSTSSSSPGTPLSPGNPFSPGTPISPGPIFPITSPPCHPSPSPFSPISSQVSSNPSPHPTSSPLPFSSSTPEFPVPLSQCPWSSLPTTSPPTFSPTCSQVTLSSPFFPPCPSTSSFPSTTAAPLLSLASAFSLAVMTVAQSLLSPSPGLLSQSPPAPPSPLPSLPLPPPVAPGGQESPSPHTAEVESEASPPPARPLPGEARLAPISEEGKPQLVGRFQVTSSKEPAEPLPLQPTSPTLSGSPKPSTPQLTSESSDTEDSAGGGPETREALAESDRAAEGLGAGVEEEGDDGKEPQVGGSPQPLSHPSPVWMNYSYSSLCLSSEESESSGEDEEFWAELQSLRQKHLSEVETLQTLQKKEIEDLYSRLGKQPPPGIVAPAAMLSSRQRRLSKGSFPTSRRNSLQRSEPPGPGIMRRNSLSGSSTGSQEQRASKGVTFAGDVGRM</sequence>
<accession>Q96J92</accession>
<accession>B0LPI0</accession>
<accession>Q8N8X3</accession>
<accession>Q8N8Z2</accession>
<accession>Q96DT8</accession>
<accession>Q9BYS5</accession>
<reference evidence="25" key="1">
    <citation type="journal article" date="2001" name="Science">
        <title>Human hypertension caused by mutations in WNK kinases.</title>
        <authorList>
            <person name="Wilson F.H."/>
            <person name="Disse-Nicodeme S."/>
            <person name="Choate K.A."/>
            <person name="Ishikawa K."/>
            <person name="Nelson-Williams C."/>
            <person name="Desitter I."/>
            <person name="Gunel M."/>
            <person name="Milford D.V."/>
            <person name="Lipkin G.W."/>
            <person name="Achard J.-M."/>
            <person name="Feely M.P."/>
            <person name="Dussol B."/>
            <person name="Berland Y."/>
            <person name="Unwin R.J."/>
            <person name="Mayan H."/>
            <person name="Simon D.B."/>
            <person name="Farfel Z."/>
            <person name="Jeunemaitre X."/>
            <person name="Lifton R.P."/>
        </authorList>
    </citation>
    <scope>NUCLEOTIDE SEQUENCE [MRNA] (ISOFORM 1)</scope>
    <scope>DISEASE</scope>
    <scope>VARIANTS PHA2B LYS-562; ALA-564; GLU-565 AND CYS-1185</scope>
    <source>
        <tissue evidence="26">Kidney</tissue>
    </source>
</reference>
<reference evidence="25" key="2">
    <citation type="thesis" date="2001" institute="College de France / Paris" country="France">
        <authorList>
            <person name="Chistiakov D.A."/>
        </authorList>
    </citation>
    <scope>NUCLEOTIDE SEQUENCE [MRNA] (ISOFORM 1)</scope>
    <source>
        <tissue evidence="28">Kidney</tissue>
    </source>
</reference>
<reference key="3">
    <citation type="journal article" date="2004" name="Nat. Genet.">
        <title>Complete sequencing and characterization of 21,243 full-length human cDNAs.</title>
        <authorList>
            <person name="Ota T."/>
            <person name="Suzuki Y."/>
            <person name="Nishikawa T."/>
            <person name="Otsuki T."/>
            <person name="Sugiyama T."/>
            <person name="Irie R."/>
            <person name="Wakamatsu A."/>
            <person name="Hayashi K."/>
            <person name="Sato H."/>
            <person name="Nagai K."/>
            <person name="Kimura K."/>
            <person name="Makita H."/>
            <person name="Sekine M."/>
            <person name="Obayashi M."/>
            <person name="Nishi T."/>
            <person name="Shibahara T."/>
            <person name="Tanaka T."/>
            <person name="Ishii S."/>
            <person name="Yamamoto J."/>
            <person name="Saito K."/>
            <person name="Kawai Y."/>
            <person name="Isono Y."/>
            <person name="Nakamura Y."/>
            <person name="Nagahari K."/>
            <person name="Murakami K."/>
            <person name="Yasuda T."/>
            <person name="Iwayanagi T."/>
            <person name="Wagatsuma M."/>
            <person name="Shiratori A."/>
            <person name="Sudo H."/>
            <person name="Hosoiri T."/>
            <person name="Kaku Y."/>
            <person name="Kodaira H."/>
            <person name="Kondo H."/>
            <person name="Sugawara M."/>
            <person name="Takahashi M."/>
            <person name="Kanda K."/>
            <person name="Yokoi T."/>
            <person name="Furuya T."/>
            <person name="Kikkawa E."/>
            <person name="Omura Y."/>
            <person name="Abe K."/>
            <person name="Kamihara K."/>
            <person name="Katsuta N."/>
            <person name="Sato K."/>
            <person name="Tanikawa M."/>
            <person name="Yamazaki M."/>
            <person name="Ninomiya K."/>
            <person name="Ishibashi T."/>
            <person name="Yamashita H."/>
            <person name="Murakawa K."/>
            <person name="Fujimori K."/>
            <person name="Tanai H."/>
            <person name="Kimata M."/>
            <person name="Watanabe M."/>
            <person name="Hiraoka S."/>
            <person name="Chiba Y."/>
            <person name="Ishida S."/>
            <person name="Ono Y."/>
            <person name="Takiguchi S."/>
            <person name="Watanabe S."/>
            <person name="Yosida M."/>
            <person name="Hotuta T."/>
            <person name="Kusano J."/>
            <person name="Kanehori K."/>
            <person name="Takahashi-Fujii A."/>
            <person name="Hara H."/>
            <person name="Tanase T.-O."/>
            <person name="Nomura Y."/>
            <person name="Togiya S."/>
            <person name="Komai F."/>
            <person name="Hara R."/>
            <person name="Takeuchi K."/>
            <person name="Arita M."/>
            <person name="Imose N."/>
            <person name="Musashino K."/>
            <person name="Yuuki H."/>
            <person name="Oshima A."/>
            <person name="Sasaki N."/>
            <person name="Aotsuka S."/>
            <person name="Yoshikawa Y."/>
            <person name="Matsunawa H."/>
            <person name="Ichihara T."/>
            <person name="Shiohata N."/>
            <person name="Sano S."/>
            <person name="Moriya S."/>
            <person name="Momiyama H."/>
            <person name="Satoh N."/>
            <person name="Takami S."/>
            <person name="Terashima Y."/>
            <person name="Suzuki O."/>
            <person name="Nakagawa S."/>
            <person name="Senoh A."/>
            <person name="Mizoguchi H."/>
            <person name="Goto Y."/>
            <person name="Shimizu F."/>
            <person name="Wakebe H."/>
            <person name="Hishigaki H."/>
            <person name="Watanabe T."/>
            <person name="Sugiyama A."/>
            <person name="Takemoto M."/>
            <person name="Kawakami B."/>
            <person name="Yamazaki M."/>
            <person name="Watanabe K."/>
            <person name="Kumagai A."/>
            <person name="Itakura S."/>
            <person name="Fukuzumi Y."/>
            <person name="Fujimori Y."/>
            <person name="Komiyama M."/>
            <person name="Tashiro H."/>
            <person name="Tanigami A."/>
            <person name="Fujiwara T."/>
            <person name="Ono T."/>
            <person name="Yamada K."/>
            <person name="Fujii Y."/>
            <person name="Ozaki K."/>
            <person name="Hirao M."/>
            <person name="Ohmori Y."/>
            <person name="Kawabata A."/>
            <person name="Hikiji T."/>
            <person name="Kobatake N."/>
            <person name="Inagaki H."/>
            <person name="Ikema Y."/>
            <person name="Okamoto S."/>
            <person name="Okitani R."/>
            <person name="Kawakami T."/>
            <person name="Noguchi S."/>
            <person name="Itoh T."/>
            <person name="Shigeta K."/>
            <person name="Senba T."/>
            <person name="Matsumura K."/>
            <person name="Nakajima Y."/>
            <person name="Mizuno T."/>
            <person name="Morinaga M."/>
            <person name="Sasaki M."/>
            <person name="Togashi T."/>
            <person name="Oyama M."/>
            <person name="Hata H."/>
            <person name="Watanabe M."/>
            <person name="Komatsu T."/>
            <person name="Mizushima-Sugano J."/>
            <person name="Satoh T."/>
            <person name="Shirai Y."/>
            <person name="Takahashi Y."/>
            <person name="Nakagawa K."/>
            <person name="Okumura K."/>
            <person name="Nagase T."/>
            <person name="Nomura N."/>
            <person name="Kikuchi H."/>
            <person name="Masuho Y."/>
            <person name="Yamashita R."/>
            <person name="Nakai K."/>
            <person name="Yada T."/>
            <person name="Nakamura Y."/>
            <person name="Ohara O."/>
            <person name="Isogai T."/>
            <person name="Sugano S."/>
        </authorList>
    </citation>
    <scope>NUCLEOTIDE SEQUENCE [LARGE SCALE MRNA] (ISOFORM 2)</scope>
    <scope>NUCLEOTIDE SEQUENCE [LARGE SCALE MRNA] OF 504-1165 (ISOFORM 3)</scope>
    <source>
        <tissue>Kidney</tissue>
    </source>
</reference>
<reference evidence="25" key="4">
    <citation type="submission" date="2007-12" db="EMBL/GenBank/DDBJ databases">
        <authorList>
            <consortium name="NHLBI resequencing and genotyping service (RS&amp;G)"/>
        </authorList>
    </citation>
    <scope>NUCLEOTIDE SEQUENCE [GENOMIC DNA]</scope>
</reference>
<reference evidence="25" key="5">
    <citation type="submission" date="2005-07" db="EMBL/GenBank/DDBJ databases">
        <authorList>
            <person name="Mural R.J."/>
            <person name="Istrail S."/>
            <person name="Sutton G."/>
            <person name="Florea L."/>
            <person name="Halpern A.L."/>
            <person name="Mobarry C.M."/>
            <person name="Lippert R."/>
            <person name="Walenz B."/>
            <person name="Shatkay H."/>
            <person name="Dew I."/>
            <person name="Miller J.R."/>
            <person name="Flanigan M.J."/>
            <person name="Edwards N.J."/>
            <person name="Bolanos R."/>
            <person name="Fasulo D."/>
            <person name="Halldorsson B.V."/>
            <person name="Hannenhalli S."/>
            <person name="Turner R."/>
            <person name="Yooseph S."/>
            <person name="Lu F."/>
            <person name="Nusskern D.R."/>
            <person name="Shue B.C."/>
            <person name="Zheng X.H."/>
            <person name="Zhong F."/>
            <person name="Delcher A.L."/>
            <person name="Huson D.H."/>
            <person name="Kravitz S.A."/>
            <person name="Mouchard L."/>
            <person name="Reinert K."/>
            <person name="Remington K.A."/>
            <person name="Clark A.G."/>
            <person name="Waterman M.S."/>
            <person name="Eichler E.E."/>
            <person name="Adams M.D."/>
            <person name="Hunkapiller M.W."/>
            <person name="Myers E.W."/>
            <person name="Venter J.C."/>
        </authorList>
    </citation>
    <scope>NUCLEOTIDE SEQUENCE [LARGE SCALE GENOMIC DNA]</scope>
</reference>
<reference key="6">
    <citation type="journal article" date="2004" name="Genome Res.">
        <title>The status, quality, and expansion of the NIH full-length cDNA project: the Mammalian Gene Collection (MGC).</title>
        <authorList>
            <consortium name="The MGC Project Team"/>
        </authorList>
    </citation>
    <scope>NUCLEOTIDE SEQUENCE [LARGE SCALE MRNA]</scope>
</reference>
<reference evidence="25" key="7">
    <citation type="journal article" date="2001" name="Oncogene">
        <title>WNK kinases, a novel protein kinase subfamily in multi-cellular organisms.</title>
        <authorList>
            <person name="Verissimo F."/>
            <person name="Jordan P."/>
        </authorList>
    </citation>
    <scope>NUCLEOTIDE SEQUENCE [MRNA] OF 207-418 (ISOFORMS 1/3)</scope>
    <scope>TISSUE SPECIFICITY</scope>
    <scope>CHROMOSOMAL LOCATION</scope>
    <source>
        <tissue evidence="27">Colon</tissue>
    </source>
</reference>
<reference key="8">
    <citation type="journal article" date="2006" name="Biochem. J.">
        <title>Functional interactions of the SPAK/OSR1 kinases with their upstream activator WNK1 and downstream substrate NKCC1.</title>
        <authorList>
            <person name="Vitari A.C."/>
            <person name="Thastrup J."/>
            <person name="Rafiqi F.H."/>
            <person name="Deak M."/>
            <person name="Morrice N.A."/>
            <person name="Karlsson H.K."/>
            <person name="Alessi D.R."/>
        </authorList>
    </citation>
    <scope>DOMAIN</scope>
    <scope>MUTAGENESIS OF ARG-1016; PHE-1017 AND VAL-1019</scope>
</reference>
<reference key="9">
    <citation type="journal article" date="2006" name="Proc. Natl. Acad. Sci. U.S.A.">
        <title>WNK1 and OSR1 regulate the Na+, K+, 2Cl- cotransporter in HeLa cells.</title>
        <authorList>
            <person name="Anselmo A.N."/>
            <person name="Earnest S."/>
            <person name="Chen W."/>
            <person name="Juang Y.C."/>
            <person name="Kim S.C."/>
            <person name="Zhao Y."/>
            <person name="Cobb M.H."/>
        </authorList>
    </citation>
    <scope>FUNCTION</scope>
    <scope>CATALYTIC ACTIVITY</scope>
</reference>
<reference key="10">
    <citation type="journal article" date="2010" name="J. Biol. Chem.">
        <title>Serum and glucocorticoid-induced kinase (SGK) 1 and the epithelial sodium channel are regulated by multiple with no lysine (WNK) family members.</title>
        <authorList>
            <person name="Heise C.J."/>
            <person name="Xu B.E."/>
            <person name="Deaton S.L."/>
            <person name="Cha S.K."/>
            <person name="Cheng C.J."/>
            <person name="Earnest S."/>
            <person name="Sengupta S."/>
            <person name="Juang Y.C."/>
            <person name="Stippec S."/>
            <person name="Xu Y."/>
            <person name="Zhao Y."/>
            <person name="Huang C.L."/>
            <person name="Cobb M.H."/>
        </authorList>
    </citation>
    <scope>FUNCTION</scope>
</reference>
<reference key="11">
    <citation type="journal article" date="2012" name="J. Biol. Chem.">
        <title>Interactions with WNK (with no lysine) family members regulate oxidative stress response 1 and ion co-transporter activity.</title>
        <authorList>
            <person name="Sengupta S."/>
            <person name="Tu S.W."/>
            <person name="Wedin K."/>
            <person name="Earnest S."/>
            <person name="Stippec S."/>
            <person name="Luby-Phelps K."/>
            <person name="Cobb M.H."/>
        </authorList>
    </citation>
    <scope>FUNCTION</scope>
</reference>
<reference key="12">
    <citation type="journal article" date="2013" name="Biochem. Biophys. Res. Commun.">
        <title>KLHL2 interacts with and ubiquitinates WNK kinases.</title>
        <authorList>
            <person name="Takahashi D."/>
            <person name="Mori T."/>
            <person name="Wakabayashi M."/>
            <person name="Mori Y."/>
            <person name="Susa K."/>
            <person name="Zeniya M."/>
            <person name="Sohara E."/>
            <person name="Rai T."/>
            <person name="Sasaki S."/>
            <person name="Uchida S."/>
        </authorList>
    </citation>
    <scope>UBIQUITINATION BY KLHL2</scope>
</reference>
<reference key="13">
    <citation type="journal article" date="2013" name="Biochem. J.">
        <title>The CUL3-KLHL3 E3 ligase complex mutated in Gordon's hypertension syndrome interacts with and ubiquitylates WNK isoforms: disease-causing mutations in KLHL3 and WNK4 disrupt interaction.</title>
        <authorList>
            <person name="Ohta A."/>
            <person name="Schumacher F.R."/>
            <person name="Mehellou Y."/>
            <person name="Johnson C."/>
            <person name="Knebel A."/>
            <person name="Macartney T.J."/>
            <person name="Wood N.T."/>
            <person name="Alessi D.R."/>
            <person name="Kurz T."/>
        </authorList>
    </citation>
    <scope>UBIQUITINATION</scope>
    <scope>CHARACTERIZATION OF VARIANTS PHA2B LYS-562 AND GLU-565</scope>
</reference>
<reference key="14">
    <citation type="journal article" date="2013" name="Cell Rep.">
        <title>Impaired KLHL3-mediated ubiquitination of WNK4 causes human hypertension.</title>
        <authorList>
            <person name="Wakabayashi M."/>
            <person name="Mori T."/>
            <person name="Isobe K."/>
            <person name="Sohara E."/>
            <person name="Susa K."/>
            <person name="Araki Y."/>
            <person name="Chiga M."/>
            <person name="Kikuchi E."/>
            <person name="Nomura N."/>
            <person name="Mori Y."/>
            <person name="Matsuo H."/>
            <person name="Murata T."/>
            <person name="Nomura S."/>
            <person name="Asano T."/>
            <person name="Kawaguchi H."/>
            <person name="Nonoyama S."/>
            <person name="Rai T."/>
            <person name="Sasaki S."/>
            <person name="Uchida S."/>
        </authorList>
    </citation>
    <scope>UBIQUITINATION</scope>
    <scope>CHARACTERIZATION OF VARIANT PHA2B ALA-564</scope>
</reference>
<reference key="15">
    <citation type="journal article" date="2013" name="FEBS Lett.">
        <title>Disease-causing mutations in KLHL3 impair its effect on WNK4 degradation.</title>
        <authorList>
            <person name="Wu G."/>
            <person name="Peng J.B."/>
        </authorList>
    </citation>
    <scope>UBIQUITINATION</scope>
</reference>
<reference key="16">
    <citation type="journal article" date="2013" name="J. Proteome Res.">
        <title>Toward a comprehensive characterization of a human cancer cell phosphoproteome.</title>
        <authorList>
            <person name="Zhou H."/>
            <person name="Di Palma S."/>
            <person name="Preisinger C."/>
            <person name="Peng M."/>
            <person name="Polat A.N."/>
            <person name="Heck A.J."/>
            <person name="Mohammed S."/>
        </authorList>
    </citation>
    <scope>PHOSPHORYLATION [LARGE SCALE ANALYSIS] AT SER-97</scope>
    <scope>IDENTIFICATION BY MASS SPECTROMETRY [LARGE SCALE ANALYSIS]</scope>
    <source>
        <tissue>Erythroleukemia</tissue>
    </source>
</reference>
<reference key="17">
    <citation type="journal article" date="2013" name="Proc. Natl. Acad. Sci. U.S.A.">
        <title>Kelch-like 3 and Cullin 3 regulate electrolyte homeostasis via ubiquitination and degradation of WNK4.</title>
        <authorList>
            <person name="Shibata S."/>
            <person name="Zhang J."/>
            <person name="Puthumana J."/>
            <person name="Stone K.L."/>
            <person name="Lifton R.P."/>
        </authorList>
    </citation>
    <scope>UBIQUITINATION AT LYS-157; LYS-175; LYS-186; LYS-226; LYS-241; LYS-328; LYS-387; LYS-393; LYS-450; LYS-454; LYS-1010; LYS-1144; LYS-1157 AND LYS-1158</scope>
    <scope>CHARACTERIZATION OF VARIANTS PHA2B LYS-562 AND GLU-565</scope>
</reference>
<reference key="18">
    <citation type="journal article" date="2015" name="Biochem. Biophys. Res. Commun.">
        <title>Impaired degradation of WNK by Akt and PKA phosphorylation of KLHL3.</title>
        <authorList>
            <person name="Yoshizaki Y."/>
            <person name="Mori Y."/>
            <person name="Tsuzaki Y."/>
            <person name="Mori T."/>
            <person name="Nomura N."/>
            <person name="Wakabayashi M."/>
            <person name="Takahashi D."/>
            <person name="Zeniya M."/>
            <person name="Kikuchi E."/>
            <person name="Araki Y."/>
            <person name="Ando F."/>
            <person name="Isobe K."/>
            <person name="Nishida H."/>
            <person name="Ohta A."/>
            <person name="Susa K."/>
            <person name="Inoue Y."/>
            <person name="Chiga M."/>
            <person name="Rai T."/>
            <person name="Sasaki S."/>
            <person name="Uchida S."/>
            <person name="Sohara E."/>
        </authorList>
    </citation>
    <scope>UBIQUITINATION</scope>
</reference>
<reference key="19">
    <citation type="journal article" date="2016" name="Sci. Rep.">
        <title>Osmotic stress induces the phosphorylation of WNK4 Ser575 via the p38MAPK-MK pathway.</title>
        <authorList>
            <person name="Maruyama J."/>
            <person name="Kobayashi Y."/>
            <person name="Umeda T."/>
            <person name="Vandewalle A."/>
            <person name="Takeda K."/>
            <person name="Ichijo H."/>
            <person name="Naguro I."/>
        </authorList>
    </citation>
    <scope>PHOSPHORYLATION AT SER-575</scope>
    <scope>MUTAGENESIS OF SER-575</scope>
</reference>
<reference key="20">
    <citation type="journal article" date="2017" name="Protein Sci.">
        <title>Phosphorylation of KLHL3 at serine 433 impairs its interaction with the acidic motif of WNK4: a molecular dynamics study.</title>
        <authorList>
            <person name="Wang L."/>
            <person name="Peng J.B."/>
        </authorList>
    </citation>
    <scope>UBIQUITINATION</scope>
</reference>
<reference evidence="30" key="21">
    <citation type="journal article" date="2007" name="EMBO Rep.">
        <title>Structural insights into the recognition of substrates and activators by the OSR1 kinase.</title>
        <authorList>
            <person name="Villa F."/>
            <person name="Goebel J."/>
            <person name="Rafiqi F.H."/>
            <person name="Deak M."/>
            <person name="Thastrup J."/>
            <person name="Alessi D.R."/>
            <person name="van Aalten D.M."/>
        </authorList>
    </citation>
    <scope>X-RAY CRYSTALLOGRAPHY (1.70 ANGSTROMS) OF 1015-1020 IN COMPLEX WITH OXSR1</scope>
    <scope>DOMAIN</scope>
</reference>
<reference evidence="31 32" key="22">
    <citation type="journal article" date="2014" name="Biochem. J.">
        <title>Structural and biochemical characterization of the KLHL3-WNK kinase interaction important in blood pressure regulation.</title>
        <authorList>
            <person name="Schumacher F.R."/>
            <person name="Sorrell F.J."/>
            <person name="Alessi D.R."/>
            <person name="Bullock A.N."/>
            <person name="Kurz T."/>
        </authorList>
    </citation>
    <scope>X-RAY CRYSTALLOGRAPHY (1.56 ANGSTROMS) OF 557-567 IN COMPLEX WITH KLHL2 AND KLHL3</scope>
    <scope>UBIQUITINATION</scope>
    <scope>CHARACTERIZATION OF VARIANTS PHA2B ALA-564 AND GLU-565</scope>
</reference>
<reference key="23">
    <citation type="journal article" date="2007" name="Nature">
        <title>Patterns of somatic mutation in human cancer genomes.</title>
        <authorList>
            <person name="Greenman C."/>
            <person name="Stephens P."/>
            <person name="Smith R."/>
            <person name="Dalgliesh G.L."/>
            <person name="Hunter C."/>
            <person name="Bignell G."/>
            <person name="Davies H."/>
            <person name="Teague J."/>
            <person name="Butler A."/>
            <person name="Stevens C."/>
            <person name="Edkins S."/>
            <person name="O'Meara S."/>
            <person name="Vastrik I."/>
            <person name="Schmidt E.E."/>
            <person name="Avis T."/>
            <person name="Barthorpe S."/>
            <person name="Bhamra G."/>
            <person name="Buck G."/>
            <person name="Choudhury B."/>
            <person name="Clements J."/>
            <person name="Cole J."/>
            <person name="Dicks E."/>
            <person name="Forbes S."/>
            <person name="Gray K."/>
            <person name="Halliday K."/>
            <person name="Harrison R."/>
            <person name="Hills K."/>
            <person name="Hinton J."/>
            <person name="Jenkinson A."/>
            <person name="Jones D."/>
            <person name="Menzies A."/>
            <person name="Mironenko T."/>
            <person name="Perry J."/>
            <person name="Raine K."/>
            <person name="Richardson D."/>
            <person name="Shepherd R."/>
            <person name="Small A."/>
            <person name="Tofts C."/>
            <person name="Varian J."/>
            <person name="Webb T."/>
            <person name="West S."/>
            <person name="Widaa S."/>
            <person name="Yates A."/>
            <person name="Cahill D.P."/>
            <person name="Louis D.N."/>
            <person name="Goldstraw P."/>
            <person name="Nicholson A.G."/>
            <person name="Brasseur F."/>
            <person name="Looijenga L."/>
            <person name="Weber B.L."/>
            <person name="Chiew Y.-E."/>
            <person name="DeFazio A."/>
            <person name="Greaves M.F."/>
            <person name="Green A.R."/>
            <person name="Campbell P."/>
            <person name="Birney E."/>
            <person name="Easton D.F."/>
            <person name="Chenevix-Trench G."/>
            <person name="Tan M.-H."/>
            <person name="Khoo S.K."/>
            <person name="Teh B.T."/>
            <person name="Yuen S.T."/>
            <person name="Leung S.Y."/>
            <person name="Wooster R."/>
            <person name="Futreal P.A."/>
            <person name="Stratton M.R."/>
        </authorList>
    </citation>
    <scope>VARIANTS [LARGE SCALE ANALYSIS] ASP-434; LEU-813; SER-992 AND PRO-1013</scope>
</reference>
<organism evidence="26">
    <name type="scientific">Homo sapiens</name>
    <name type="common">Human</name>
    <dbReference type="NCBI Taxonomy" id="9606"/>
    <lineage>
        <taxon>Eukaryota</taxon>
        <taxon>Metazoa</taxon>
        <taxon>Chordata</taxon>
        <taxon>Craniata</taxon>
        <taxon>Vertebrata</taxon>
        <taxon>Euteleostomi</taxon>
        <taxon>Mammalia</taxon>
        <taxon>Eutheria</taxon>
        <taxon>Euarchontoglires</taxon>
        <taxon>Primates</taxon>
        <taxon>Haplorrhini</taxon>
        <taxon>Catarrhini</taxon>
        <taxon>Hominidae</taxon>
        <taxon>Homo</taxon>
    </lineage>
</organism>
<feature type="chain" id="PRO_0000086824" description="Serine/threonine-protein kinase WNK4">
    <location>
        <begin position="1"/>
        <end position="1243"/>
    </location>
</feature>
<feature type="domain" description="Protein kinase" evidence="5">
    <location>
        <begin position="174"/>
        <end position="432"/>
    </location>
</feature>
<feature type="region of interest" description="Disordered" evidence="6">
    <location>
        <begin position="1"/>
        <end position="142"/>
    </location>
</feature>
<feature type="region of interest" description="Disordered" evidence="6">
    <location>
        <begin position="526"/>
        <end position="564"/>
    </location>
</feature>
<feature type="region of interest" description="Interaction with KLHL3" evidence="19">
    <location>
        <begin position="557"/>
        <end position="567"/>
    </location>
</feature>
<feature type="region of interest" description="Disordered" evidence="6">
    <location>
        <begin position="630"/>
        <end position="683"/>
    </location>
</feature>
<feature type="region of interest" description="Disordered" evidence="6">
    <location>
        <begin position="751"/>
        <end position="871"/>
    </location>
</feature>
<feature type="region of interest" description="Disordered" evidence="6">
    <location>
        <begin position="943"/>
        <end position="1110"/>
    </location>
</feature>
<feature type="region of interest" description="Disordered" evidence="6">
    <location>
        <begin position="1166"/>
        <end position="1243"/>
    </location>
</feature>
<feature type="short sequence motif" description="RFXV motif" evidence="9 19">
    <location>
        <begin position="1016"/>
        <end position="1019"/>
    </location>
</feature>
<feature type="compositionally biased region" description="Polar residues" evidence="6">
    <location>
        <begin position="1"/>
        <end position="17"/>
    </location>
</feature>
<feature type="compositionally biased region" description="Low complexity" evidence="6">
    <location>
        <begin position="65"/>
        <end position="77"/>
    </location>
</feature>
<feature type="compositionally biased region" description="Pro residues" evidence="6">
    <location>
        <begin position="78"/>
        <end position="103"/>
    </location>
</feature>
<feature type="compositionally biased region" description="Basic and acidic residues" evidence="6">
    <location>
        <begin position="118"/>
        <end position="127"/>
    </location>
</feature>
<feature type="compositionally biased region" description="Pro residues" evidence="6">
    <location>
        <begin position="534"/>
        <end position="556"/>
    </location>
</feature>
<feature type="compositionally biased region" description="Low complexity" evidence="6">
    <location>
        <begin position="630"/>
        <end position="641"/>
    </location>
</feature>
<feature type="compositionally biased region" description="Basic residues" evidence="6">
    <location>
        <begin position="663"/>
        <end position="676"/>
    </location>
</feature>
<feature type="compositionally biased region" description="Pro residues" evidence="6">
    <location>
        <begin position="767"/>
        <end position="780"/>
    </location>
</feature>
<feature type="compositionally biased region" description="Low complexity" evidence="6">
    <location>
        <begin position="797"/>
        <end position="812"/>
    </location>
</feature>
<feature type="compositionally biased region" description="Pro residues" evidence="6">
    <location>
        <begin position="822"/>
        <end position="843"/>
    </location>
</feature>
<feature type="compositionally biased region" description="Low complexity" evidence="6">
    <location>
        <begin position="844"/>
        <end position="854"/>
    </location>
</feature>
<feature type="compositionally biased region" description="Low complexity" evidence="6">
    <location>
        <begin position="862"/>
        <end position="871"/>
    </location>
</feature>
<feature type="compositionally biased region" description="Low complexity" evidence="6">
    <location>
        <begin position="943"/>
        <end position="952"/>
    </location>
</feature>
<feature type="compositionally biased region" description="Pro residues" evidence="6">
    <location>
        <begin position="953"/>
        <end position="970"/>
    </location>
</feature>
<feature type="compositionally biased region" description="Basic and acidic residues" evidence="6">
    <location>
        <begin position="1065"/>
        <end position="1077"/>
    </location>
</feature>
<feature type="compositionally biased region" description="Polar residues" evidence="6">
    <location>
        <begin position="1193"/>
        <end position="1204"/>
    </location>
</feature>
<feature type="compositionally biased region" description="Polar residues" evidence="6">
    <location>
        <begin position="1216"/>
        <end position="1228"/>
    </location>
</feature>
<feature type="active site" description="Proton acceptor" evidence="4">
    <location>
        <position position="321"/>
    </location>
</feature>
<feature type="binding site" evidence="3">
    <location>
        <position position="184"/>
    </location>
    <ligand>
        <name>ATP</name>
        <dbReference type="ChEBI" id="CHEBI:30616"/>
    </ligand>
</feature>
<feature type="binding site" evidence="3">
    <location>
        <begin position="254"/>
        <end position="257"/>
    </location>
    <ligand>
        <name>ATP</name>
        <dbReference type="ChEBI" id="CHEBI:30616"/>
    </ligand>
</feature>
<feature type="binding site" evidence="3">
    <location>
        <position position="304"/>
    </location>
    <ligand>
        <name>ATP</name>
        <dbReference type="ChEBI" id="CHEBI:30616"/>
    </ligand>
</feature>
<feature type="modified residue" description="Phosphoserine" evidence="33">
    <location>
        <position position="97"/>
    </location>
</feature>
<feature type="modified residue" description="Phosphoserine; by autocatalysis" evidence="4">
    <location>
        <position position="331"/>
    </location>
</feature>
<feature type="modified residue" description="Phosphoserine; by autocatalysis" evidence="4">
    <location>
        <position position="335"/>
    </location>
</feature>
<feature type="modified residue" description="Phosphoserine" evidence="21">
    <location>
        <position position="575"/>
    </location>
</feature>
<feature type="modified residue" description="Phosphoserine" evidence="1">
    <location>
        <position position="1035"/>
    </location>
</feature>
<feature type="modified residue" description="Phosphoserine" evidence="2">
    <location>
        <position position="1217"/>
    </location>
</feature>
<feature type="cross-link" description="Glycyl lysine isopeptide (Lys-Gly) (interchain with G-Cter in ubiquitin)" evidence="16">
    <location>
        <position position="157"/>
    </location>
</feature>
<feature type="cross-link" description="Glycyl lysine isopeptide (Lys-Gly) (interchain with G-Cter in ubiquitin)" evidence="16">
    <location>
        <position position="175"/>
    </location>
</feature>
<feature type="cross-link" description="Glycyl lysine isopeptide (Lys-Gly) (interchain with G-Cter in ubiquitin)" evidence="16">
    <location>
        <position position="186"/>
    </location>
</feature>
<feature type="cross-link" description="Glycyl lysine isopeptide (Lys-Gly) (interchain with G-Cter in ubiquitin)" evidence="16">
    <location>
        <position position="226"/>
    </location>
</feature>
<feature type="cross-link" description="Glycyl lysine isopeptide (Lys-Gly) (interchain with G-Cter in ubiquitin)" evidence="16">
    <location>
        <position position="241"/>
    </location>
</feature>
<feature type="cross-link" description="Glycyl lysine isopeptide (Lys-Gly) (interchain with G-Cter in ubiquitin)" evidence="16">
    <location>
        <position position="328"/>
    </location>
</feature>
<feature type="cross-link" description="Glycyl lysine isopeptide (Lys-Gly) (interchain with G-Cter in ubiquitin)" evidence="16">
    <location>
        <position position="387"/>
    </location>
</feature>
<feature type="cross-link" description="Glycyl lysine isopeptide (Lys-Gly) (interchain with G-Cter in ubiquitin)" evidence="16">
    <location>
        <position position="393"/>
    </location>
</feature>
<feature type="cross-link" description="Glycyl lysine isopeptide (Lys-Gly) (interchain with G-Cter in ubiquitin)" evidence="16">
    <location>
        <position position="450"/>
    </location>
</feature>
<feature type="cross-link" description="Glycyl lysine isopeptide (Lys-Gly) (interchain with G-Cter in ubiquitin)" evidence="16">
    <location>
        <position position="454"/>
    </location>
</feature>
<feature type="cross-link" description="Glycyl lysine isopeptide (Lys-Gly) (interchain with G-Cter in ubiquitin)" evidence="16">
    <location>
        <position position="1010"/>
    </location>
</feature>
<feature type="cross-link" description="Glycyl lysine isopeptide (Lys-Gly) (interchain with G-Cter in ubiquitin)" evidence="16">
    <location>
        <position position="1144"/>
    </location>
</feature>
<feature type="cross-link" description="Glycyl lysine isopeptide (Lys-Gly) (interchain with G-Cter in ubiquitin)" evidence="16">
    <location>
        <position position="1157"/>
    </location>
</feature>
<feature type="cross-link" description="Glycyl lysine isopeptide (Lys-Gly) (interchain with G-Cter in ubiquitin)" evidence="16">
    <location>
        <position position="1158"/>
    </location>
</feature>
<feature type="splice variant" id="VSP_050648" description="In isoform 2." evidence="24">
    <location>
        <begin position="1"/>
        <end position="228"/>
    </location>
</feature>
<feature type="splice variant" id="VSP_050649" description="In isoform 2." evidence="24">
    <original>QHPNIVRFYDSWKSVLRGQVCIVLVTELMTSGTLKT</original>
    <variation>MRRRQQGAAGGNFPVGGSFPEDVSPHQDSGYAPSPR</variation>
    <location>
        <begin position="229"/>
        <end position="264"/>
    </location>
</feature>
<feature type="splice variant" id="VSP_050650" description="In isoform 2." evidence="24">
    <location>
        <begin position="828"/>
        <end position="1210"/>
    </location>
</feature>
<feature type="splice variant" id="VSP_050652" description="In isoform 3." evidence="24">
    <original>HLSEVETLQTLQKKEIEDLYS</original>
    <variation>PFHALRASSGTCQRWKHYRHY</variation>
    <location>
        <begin position="1145"/>
        <end position="1165"/>
    </location>
</feature>
<feature type="splice variant" id="VSP_050653" description="In isoform 3." evidence="24">
    <location>
        <begin position="1166"/>
        <end position="1243"/>
    </location>
</feature>
<feature type="splice variant" id="VSP_050651" description="In isoform 2." evidence="24">
    <original>GVTFAGDVGRM</original>
    <variation>EAGQRPGKLWLRATVQLRVWGLELRRKEMMGRNPKLGAAPNP</variation>
    <location>
        <begin position="1233"/>
        <end position="1243"/>
    </location>
</feature>
<feature type="sequence variant" id="VAR_041330" description="In an ovarian mucinous carcinoma sample; somatic mutation." evidence="11">
    <original>E</original>
    <variation>D</variation>
    <location>
        <position position="434"/>
    </location>
</feature>
<feature type="sequence variant" id="VAR_017588" description="In PHA2B; impaired interaction with KLHL3; dbSNP:rs137853093." evidence="7 14 16">
    <original>E</original>
    <variation>K</variation>
    <location>
        <position position="562"/>
    </location>
</feature>
<feature type="sequence variant" id="VAR_017589" description="In PHA2B; impaired interaction with KLHL3; dbSNP:rs137853094." evidence="7 15 19">
    <original>D</original>
    <variation>A</variation>
    <location>
        <position position="564"/>
    </location>
</feature>
<feature type="sequence variant" id="VAR_017590" description="In PHA2B; impaired interaction with KLHL3; dbSNP:rs137853092." evidence="7 14 16 19">
    <original>Q</original>
    <variation>E</variation>
    <location>
        <position position="565"/>
    </location>
</feature>
<feature type="sequence variant" id="VAR_061748" description="In dbSNP:rs55781437.">
    <original>A</original>
    <variation>S</variation>
    <location>
        <position position="601"/>
    </location>
</feature>
<feature type="sequence variant" id="VAR_051685" description="In dbSNP:rs9896991.">
    <original>R</original>
    <variation>W</variation>
    <location>
        <position position="677"/>
    </location>
</feature>
<feature type="sequence variant" id="VAR_041331" evidence="11">
    <original>P</original>
    <variation>L</variation>
    <location>
        <position position="813"/>
    </location>
</feature>
<feature type="sequence variant" id="VAR_051686" description="In dbSNP:rs2290041.">
    <original>P</original>
    <variation>S</variation>
    <location>
        <position position="961"/>
    </location>
</feature>
<feature type="sequence variant" id="VAR_041332" description="In a metastatic melanoma sample; somatic mutation." evidence="11">
    <original>P</original>
    <variation>S</variation>
    <location>
        <position position="992"/>
    </location>
</feature>
<feature type="sequence variant" id="VAR_041333" evidence="11">
    <original>L</original>
    <variation>P</variation>
    <location>
        <position position="1013"/>
    </location>
</feature>
<feature type="sequence variant" id="VAR_017591" description="In PHA2B; dbSNP:rs137853095." evidence="7">
    <original>R</original>
    <variation>C</variation>
    <location>
        <position position="1185"/>
    </location>
</feature>
<feature type="mutagenesis site" description="Abolished MAP3K15/ASK3-dependent phosphorylation." evidence="21">
    <original>S</original>
    <variation>A</variation>
    <location>
        <position position="575"/>
    </location>
</feature>
<feature type="mutagenesis site" description="Mimics phosphorylation without affecting WNK4 kinase activity." evidence="21">
    <original>S</original>
    <variation>E</variation>
    <variation>D</variation>
    <location>
        <position position="575"/>
    </location>
</feature>
<feature type="mutagenesis site" description="Abolished interaction with OXSR1/OSR1." evidence="9">
    <original>R</original>
    <variation>A</variation>
    <location>
        <position position="1016"/>
    </location>
</feature>
<feature type="mutagenesis site" description="Abolished interaction with OXSR1/OSR1." evidence="9">
    <original>F</original>
    <variation>A</variation>
    <location>
        <position position="1017"/>
    </location>
</feature>
<feature type="mutagenesis site" description="Abolished interaction with OXSR1/OSR1." evidence="9">
    <original>V</original>
    <variation>A</variation>
    <location>
        <position position="1019"/>
    </location>
</feature>
<feature type="sequence conflict" description="In Ref. 3; BAC04688." evidence="25" ref="3">
    <original>R</original>
    <variation>C</variation>
    <location>
        <position position="525"/>
    </location>
</feature>
<feature type="helix" evidence="34">
    <location>
        <begin position="562"/>
        <end position="564"/>
    </location>
</feature>